<proteinExistence type="evidence at protein level"/>
<comment type="function">
    <text>Positive regulator of allophanate-induced genes in S.cerevisiae.</text>
</comment>
<keyword id="KW-0010">Activator</keyword>
<keyword id="KW-1185">Reference proteome</keyword>
<keyword id="KW-0804">Transcription</keyword>
<keyword id="KW-0805">Transcription regulation</keyword>
<organism>
    <name type="scientific">Saccharomyces cerevisiae (strain ATCC 204508 / S288c)</name>
    <name type="common">Baker's yeast</name>
    <dbReference type="NCBI Taxonomy" id="559292"/>
    <lineage>
        <taxon>Eukaryota</taxon>
        <taxon>Fungi</taxon>
        <taxon>Dikarya</taxon>
        <taxon>Ascomycota</taxon>
        <taxon>Saccharomycotina</taxon>
        <taxon>Saccharomycetes</taxon>
        <taxon>Saccharomycetales</taxon>
        <taxon>Saccharomycetaceae</taxon>
        <taxon>Saccharomyces</taxon>
    </lineage>
</organism>
<sequence>MDESVDPVELLLRLLIRHKPHLKPYAYRQDSWQRVLDEYNRQTGSRYRQSRTLKTKFRRLKDLFSADRAQFSPSQLKLMGALLDEAPEHPRPRTKFGNESSSSLSSSSFIKSHPGPDPFQQLSSAEHPNNHSSDDEHSGSQPLPLDSITIGIPPTLHTIPMILSKDNDVGKVIKSPKINKGTNRFSETVLPPQMAAEQSWSDSNMELEICLDYLHNELEVIKKRQEDFECKVLNKLNIIEALLSQMRPPSQGDKI</sequence>
<name>DAL82_YEAST</name>
<gene>
    <name type="primary">DAL82</name>
    <name type="synonym">DURM</name>
    <name type="ordered locus">YNL314W</name>
    <name type="ORF">N0360</name>
</gene>
<accession>P21705</accession>
<accession>D6W0N1</accession>
<reference key="1">
    <citation type="journal article" date="1990" name="Nucleic Acids Res.">
        <title>Nucleotide sequence of the DURM gene coding for a positive regulator of allophanate-inducible genes in Saccharomyces cerevisiae.</title>
        <authorList>
            <person name="Andre B."/>
            <person name="Jauniaux J.-C."/>
        </authorList>
    </citation>
    <scope>NUCLEOTIDE SEQUENCE [GENOMIC DNA]</scope>
    <source>
        <strain>Sigma 1278B</strain>
    </source>
</reference>
<reference key="2">
    <citation type="journal article" date="1991" name="J. Bacteriol.">
        <title>DAL82, a second gene required for induction of allantoin system gene transcription in Saccharomyces cerevisiae.</title>
        <authorList>
            <person name="Olive M.G."/>
            <person name="Daugherty J.R."/>
            <person name="Cooper T.G."/>
        </authorList>
    </citation>
    <scope>NUCLEOTIDE SEQUENCE [GENOMIC DNA]</scope>
</reference>
<reference key="3">
    <citation type="journal article" date="1995" name="Yeast">
        <title>Sequencing analysis of a 24.7 kb fragment of yeast chromosome XIV identifies six known genes, a new member of the hexose transporter family and ten new open reading frames.</title>
        <authorList>
            <person name="Maftahi M."/>
            <person name="Nicaud J.-M."/>
            <person name="Levesque H."/>
            <person name="Gaillardin C."/>
        </authorList>
    </citation>
    <scope>NUCLEOTIDE SEQUENCE [GENOMIC DNA]</scope>
    <source>
        <strain>S288c / FY1676</strain>
    </source>
</reference>
<reference key="4">
    <citation type="journal article" date="1997" name="Nature">
        <title>The nucleotide sequence of Saccharomyces cerevisiae chromosome XIV and its evolutionary implications.</title>
        <authorList>
            <person name="Philippsen P."/>
            <person name="Kleine K."/>
            <person name="Poehlmann R."/>
            <person name="Duesterhoeft A."/>
            <person name="Hamberg K."/>
            <person name="Hegemann J.H."/>
            <person name="Obermaier B."/>
            <person name="Urrestarazu L.A."/>
            <person name="Aert R."/>
            <person name="Albermann K."/>
            <person name="Altmann R."/>
            <person name="Andre B."/>
            <person name="Baladron V."/>
            <person name="Ballesta J.P.G."/>
            <person name="Becam A.-M."/>
            <person name="Beinhauer J.D."/>
            <person name="Boskovic J."/>
            <person name="Buitrago M.J."/>
            <person name="Bussereau F."/>
            <person name="Coster F."/>
            <person name="Crouzet M."/>
            <person name="D'Angelo M."/>
            <person name="Dal Pero F."/>
            <person name="De Antoni A."/>
            <person name="del Rey F."/>
            <person name="Doignon F."/>
            <person name="Domdey H."/>
            <person name="Dubois E."/>
            <person name="Fiedler T.A."/>
            <person name="Fleig U."/>
            <person name="Floeth M."/>
            <person name="Fritz C."/>
            <person name="Gaillardin C."/>
            <person name="Garcia-Cantalejo J.M."/>
            <person name="Glansdorff N."/>
            <person name="Goffeau A."/>
            <person name="Gueldener U."/>
            <person name="Herbert C.J."/>
            <person name="Heumann K."/>
            <person name="Heuss-Neitzel D."/>
            <person name="Hilbert H."/>
            <person name="Hinni K."/>
            <person name="Iraqui Houssaini I."/>
            <person name="Jacquet M."/>
            <person name="Jimenez A."/>
            <person name="Jonniaux J.-L."/>
            <person name="Karpfinger-Hartl L."/>
            <person name="Lanfranchi G."/>
            <person name="Lepingle A."/>
            <person name="Levesque H."/>
            <person name="Lyck R."/>
            <person name="Maftahi M."/>
            <person name="Mallet L."/>
            <person name="Maurer C.T.C."/>
            <person name="Messenguy F."/>
            <person name="Mewes H.-W."/>
            <person name="Moestl D."/>
            <person name="Nasr F."/>
            <person name="Nicaud J.-M."/>
            <person name="Niedenthal R.K."/>
            <person name="Pandolfo D."/>
            <person name="Pierard A."/>
            <person name="Piravandi E."/>
            <person name="Planta R.J."/>
            <person name="Pohl T.M."/>
            <person name="Purnelle B."/>
            <person name="Rebischung C."/>
            <person name="Remacha M.A."/>
            <person name="Revuelta J.L."/>
            <person name="Rinke M."/>
            <person name="Saiz J.E."/>
            <person name="Sartorello F."/>
            <person name="Scherens B."/>
            <person name="Sen-Gupta M."/>
            <person name="Soler-Mira A."/>
            <person name="Urbanus J.H.M."/>
            <person name="Valle G."/>
            <person name="Van Dyck L."/>
            <person name="Verhasselt P."/>
            <person name="Vierendeels F."/>
            <person name="Vissers S."/>
            <person name="Voet M."/>
            <person name="Volckaert G."/>
            <person name="Wach A."/>
            <person name="Wambutt R."/>
            <person name="Wedler H."/>
            <person name="Zollner A."/>
            <person name="Hani J."/>
        </authorList>
    </citation>
    <scope>NUCLEOTIDE SEQUENCE [LARGE SCALE GENOMIC DNA]</scope>
    <source>
        <strain>ATCC 204508 / S288c</strain>
    </source>
</reference>
<reference key="5">
    <citation type="journal article" date="2014" name="G3 (Bethesda)">
        <title>The reference genome sequence of Saccharomyces cerevisiae: Then and now.</title>
        <authorList>
            <person name="Engel S.R."/>
            <person name="Dietrich F.S."/>
            <person name="Fisk D.G."/>
            <person name="Binkley G."/>
            <person name="Balakrishnan R."/>
            <person name="Costanzo M.C."/>
            <person name="Dwight S.S."/>
            <person name="Hitz B.C."/>
            <person name="Karra K."/>
            <person name="Nash R.S."/>
            <person name="Weng S."/>
            <person name="Wong E.D."/>
            <person name="Lloyd P."/>
            <person name="Skrzypek M.S."/>
            <person name="Miyasato S.R."/>
            <person name="Simison M."/>
            <person name="Cherry J.M."/>
        </authorList>
    </citation>
    <scope>GENOME REANNOTATION</scope>
    <source>
        <strain>ATCC 204508 / S288c</strain>
    </source>
</reference>
<reference key="6">
    <citation type="journal article" date="1992" name="J. Biol. Chem.">
        <title>Characterization of ATP11 and detection of the encoded protein in mitochondria of Saccharomyces cerevisiae.</title>
        <authorList>
            <person name="Ackerman S.H."/>
            <person name="Martin J."/>
            <person name="Tzagoloff A."/>
        </authorList>
    </citation>
    <scope>NUCLEOTIDE SEQUENCE [GENOMIC DNA] OF 1-6</scope>
</reference>
<reference key="7">
    <citation type="journal article" date="2008" name="Mol. Cell. Proteomics">
        <title>A multidimensional chromatography technology for in-depth phosphoproteome analysis.</title>
        <authorList>
            <person name="Albuquerque C.P."/>
            <person name="Smolka M.B."/>
            <person name="Payne S.H."/>
            <person name="Bafna V."/>
            <person name="Eng J."/>
            <person name="Zhou H."/>
        </authorList>
    </citation>
    <scope>IDENTIFICATION BY MASS SPECTROMETRY [LARGE SCALE ANALYSIS]</scope>
</reference>
<feature type="chain" id="PRO_0000079776" description="Protein DAL82">
    <location>
        <begin position="1"/>
        <end position="255"/>
    </location>
</feature>
<feature type="region of interest" description="Disordered" evidence="1">
    <location>
        <begin position="87"/>
        <end position="149"/>
    </location>
</feature>
<feature type="compositionally biased region" description="Basic and acidic residues" evidence="1">
    <location>
        <begin position="128"/>
        <end position="138"/>
    </location>
</feature>
<feature type="sequence conflict" description="In Ref. 1; CAA38391." evidence="2" ref="1">
    <original>P</original>
    <variation>S</variation>
    <location>
        <position position="87"/>
    </location>
</feature>
<feature type="sequence conflict" description="In Ref. 1; CAA38391." evidence="2" ref="1">
    <original>L</original>
    <variation>S</variation>
    <location>
        <position position="104"/>
    </location>
</feature>
<protein>
    <recommendedName>
        <fullName>Protein DAL82</fullName>
    </recommendedName>
</protein>
<dbReference type="EMBL" id="X54525">
    <property type="protein sequence ID" value="CAA38391.1"/>
    <property type="molecule type" value="Genomic_DNA"/>
</dbReference>
<dbReference type="EMBL" id="M60414">
    <property type="protein sequence ID" value="AAA34558.1"/>
    <property type="molecule type" value="Genomic_DNA"/>
</dbReference>
<dbReference type="EMBL" id="Z46259">
    <property type="protein sequence ID" value="CAA86382.1"/>
    <property type="molecule type" value="Genomic_DNA"/>
</dbReference>
<dbReference type="EMBL" id="Z71590">
    <property type="protein sequence ID" value="CAA96244.1"/>
    <property type="molecule type" value="Genomic_DNA"/>
</dbReference>
<dbReference type="EMBL" id="M87006">
    <property type="protein sequence ID" value="AAA34446.1"/>
    <property type="molecule type" value="Genomic_DNA"/>
</dbReference>
<dbReference type="EMBL" id="BK006947">
    <property type="protein sequence ID" value="DAA10247.1"/>
    <property type="molecule type" value="Genomic_DNA"/>
</dbReference>
<dbReference type="PIR" id="A39195">
    <property type="entry name" value="A39195"/>
</dbReference>
<dbReference type="RefSeq" id="NP_014085.1">
    <property type="nucleotide sequence ID" value="NM_001183152.1"/>
</dbReference>
<dbReference type="SMR" id="P21705"/>
<dbReference type="BioGRID" id="35525">
    <property type="interactions" value="128"/>
</dbReference>
<dbReference type="DIP" id="DIP-1285N"/>
<dbReference type="FunCoup" id="P21705">
    <property type="interactions" value="790"/>
</dbReference>
<dbReference type="IntAct" id="P21705">
    <property type="interactions" value="21"/>
</dbReference>
<dbReference type="MINT" id="P21705"/>
<dbReference type="STRING" id="4932.YNL314W"/>
<dbReference type="iPTMnet" id="P21705"/>
<dbReference type="PaxDb" id="4932-YNL314W"/>
<dbReference type="PeptideAtlas" id="P21705"/>
<dbReference type="EnsemblFungi" id="YNL314W_mRNA">
    <property type="protein sequence ID" value="YNL314W"/>
    <property type="gene ID" value="YNL314W"/>
</dbReference>
<dbReference type="GeneID" id="855402"/>
<dbReference type="KEGG" id="sce:YNL314W"/>
<dbReference type="AGR" id="SGD:S000005258"/>
<dbReference type="SGD" id="S000005258">
    <property type="gene designation" value="DAL82"/>
</dbReference>
<dbReference type="VEuPathDB" id="FungiDB:YNL314W"/>
<dbReference type="eggNOG" id="ENOG502S89R">
    <property type="taxonomic scope" value="Eukaryota"/>
</dbReference>
<dbReference type="HOGENOM" id="CLU_084829_0_0_1"/>
<dbReference type="InParanoid" id="P21705"/>
<dbReference type="OMA" id="NMELEIC"/>
<dbReference type="OrthoDB" id="4066471at2759"/>
<dbReference type="BioCyc" id="YEAST:G3O-33301-MONOMER"/>
<dbReference type="BioGRID-ORCS" id="855402">
    <property type="hits" value="0 hits in 13 CRISPR screens"/>
</dbReference>
<dbReference type="PRO" id="PR:P21705"/>
<dbReference type="Proteomes" id="UP000002311">
    <property type="component" value="Chromosome XIV"/>
</dbReference>
<dbReference type="RNAct" id="P21705">
    <property type="molecule type" value="protein"/>
</dbReference>
<dbReference type="GO" id="GO:0005634">
    <property type="term" value="C:nucleus"/>
    <property type="evidence" value="ECO:0000314"/>
    <property type="project" value="SGD"/>
</dbReference>
<dbReference type="GO" id="GO:0043565">
    <property type="term" value="F:sequence-specific DNA binding"/>
    <property type="evidence" value="ECO:0000314"/>
    <property type="project" value="SGD"/>
</dbReference>
<dbReference type="GO" id="GO:0000256">
    <property type="term" value="P:allantoin catabolic process"/>
    <property type="evidence" value="ECO:0000315"/>
    <property type="project" value="SGD"/>
</dbReference>
<dbReference type="GO" id="GO:0045944">
    <property type="term" value="P:positive regulation of transcription by RNA polymerase II"/>
    <property type="evidence" value="ECO:0000315"/>
    <property type="project" value="SGD"/>
</dbReference>
<evidence type="ECO:0000256" key="1">
    <source>
        <dbReference type="SAM" id="MobiDB-lite"/>
    </source>
</evidence>
<evidence type="ECO:0000305" key="2"/>